<sequence>MRKLTILGATGSIGASTLKVIAQNPQQFSIVALVAGVNVAKMYQLCQQWRPKYAVMATASAASELQGLLKNQAMATEVLYGEEAMCQVAALDDVDTVMAAIVGAAGLLPTMAAVKAGKRVLLANKEALVMSGQLFIDAVAQSGAELMPVDSEHNAIFQCLPTEIQTQLGRCDLSQHGIDHILLTGSGGPFRYSDLATLDSVTPEQAIAHPNWSMGPKISVDSATMMNKGLEYIEAKWLFNTSREQLKVLIHPQSVIHSMVQYQDGSVIAQLGEPDMATPISYAMAYPERVTAGVPALDFTRLQQLTFMEVDFARYPCLQLAMDACFLGQHATTSLNAANEVAVDAFLKRKIRFTDIALINDQVLSKVCATNTQLHCRDLESLLELDTMARHFAHQVLKERQA</sequence>
<comment type="function">
    <text evidence="1">Catalyzes the NADPH-dependent rearrangement and reduction of 1-deoxy-D-xylulose-5-phosphate (DXP) to 2-C-methyl-D-erythritol 4-phosphate (MEP).</text>
</comment>
<comment type="catalytic activity">
    <reaction evidence="1">
        <text>2-C-methyl-D-erythritol 4-phosphate + NADP(+) = 1-deoxy-D-xylulose 5-phosphate + NADPH + H(+)</text>
        <dbReference type="Rhea" id="RHEA:13717"/>
        <dbReference type="ChEBI" id="CHEBI:15378"/>
        <dbReference type="ChEBI" id="CHEBI:57783"/>
        <dbReference type="ChEBI" id="CHEBI:57792"/>
        <dbReference type="ChEBI" id="CHEBI:58262"/>
        <dbReference type="ChEBI" id="CHEBI:58349"/>
        <dbReference type="EC" id="1.1.1.267"/>
    </reaction>
    <physiologicalReaction direction="right-to-left" evidence="1">
        <dbReference type="Rhea" id="RHEA:13719"/>
    </physiologicalReaction>
</comment>
<comment type="cofactor">
    <cofactor evidence="1">
        <name>Mg(2+)</name>
        <dbReference type="ChEBI" id="CHEBI:18420"/>
    </cofactor>
    <cofactor evidence="1">
        <name>Mn(2+)</name>
        <dbReference type="ChEBI" id="CHEBI:29035"/>
    </cofactor>
</comment>
<comment type="pathway">
    <text evidence="1">Isoprenoid biosynthesis; isopentenyl diphosphate biosynthesis via DXP pathway; isopentenyl diphosphate from 1-deoxy-D-xylulose 5-phosphate: step 1/6.</text>
</comment>
<comment type="similarity">
    <text evidence="1">Belongs to the DXR family.</text>
</comment>
<evidence type="ECO:0000255" key="1">
    <source>
        <dbReference type="HAMAP-Rule" id="MF_00183"/>
    </source>
</evidence>
<gene>
    <name evidence="1" type="primary">dxr</name>
    <name type="ordered locus">VC0395_A1845</name>
    <name type="ordered locus">VC395_2370</name>
</gene>
<proteinExistence type="inferred from homology"/>
<feature type="chain" id="PRO_1000071669" description="1-deoxy-D-xylulose 5-phosphate reductoisomerase">
    <location>
        <begin position="1"/>
        <end position="402"/>
    </location>
</feature>
<feature type="binding site" evidence="1">
    <location>
        <position position="10"/>
    </location>
    <ligand>
        <name>NADPH</name>
        <dbReference type="ChEBI" id="CHEBI:57783"/>
    </ligand>
</feature>
<feature type="binding site" evidence="1">
    <location>
        <position position="11"/>
    </location>
    <ligand>
        <name>NADPH</name>
        <dbReference type="ChEBI" id="CHEBI:57783"/>
    </ligand>
</feature>
<feature type="binding site" evidence="1">
    <location>
        <position position="12"/>
    </location>
    <ligand>
        <name>NADPH</name>
        <dbReference type="ChEBI" id="CHEBI:57783"/>
    </ligand>
</feature>
<feature type="binding site" evidence="1">
    <location>
        <position position="13"/>
    </location>
    <ligand>
        <name>NADPH</name>
        <dbReference type="ChEBI" id="CHEBI:57783"/>
    </ligand>
</feature>
<feature type="binding site" evidence="1">
    <location>
        <position position="36"/>
    </location>
    <ligand>
        <name>NADPH</name>
        <dbReference type="ChEBI" id="CHEBI:57783"/>
    </ligand>
</feature>
<feature type="binding site" evidence="1">
    <location>
        <position position="38"/>
    </location>
    <ligand>
        <name>NADPH</name>
        <dbReference type="ChEBI" id="CHEBI:57783"/>
    </ligand>
</feature>
<feature type="binding site" evidence="1">
    <location>
        <position position="124"/>
    </location>
    <ligand>
        <name>NADPH</name>
        <dbReference type="ChEBI" id="CHEBI:57783"/>
    </ligand>
</feature>
<feature type="binding site" evidence="1">
    <location>
        <position position="125"/>
    </location>
    <ligand>
        <name>1-deoxy-D-xylulose 5-phosphate</name>
        <dbReference type="ChEBI" id="CHEBI:57792"/>
    </ligand>
</feature>
<feature type="binding site" evidence="1">
    <location>
        <position position="126"/>
    </location>
    <ligand>
        <name>NADPH</name>
        <dbReference type="ChEBI" id="CHEBI:57783"/>
    </ligand>
</feature>
<feature type="binding site" evidence="1">
    <location>
        <position position="150"/>
    </location>
    <ligand>
        <name>Mn(2+)</name>
        <dbReference type="ChEBI" id="CHEBI:29035"/>
    </ligand>
</feature>
<feature type="binding site" evidence="1">
    <location>
        <position position="151"/>
    </location>
    <ligand>
        <name>1-deoxy-D-xylulose 5-phosphate</name>
        <dbReference type="ChEBI" id="CHEBI:57792"/>
    </ligand>
</feature>
<feature type="binding site" evidence="1">
    <location>
        <position position="152"/>
    </location>
    <ligand>
        <name>1-deoxy-D-xylulose 5-phosphate</name>
        <dbReference type="ChEBI" id="CHEBI:57792"/>
    </ligand>
</feature>
<feature type="binding site" evidence="1">
    <location>
        <position position="152"/>
    </location>
    <ligand>
        <name>Mn(2+)</name>
        <dbReference type="ChEBI" id="CHEBI:29035"/>
    </ligand>
</feature>
<feature type="binding site" evidence="1">
    <location>
        <position position="186"/>
    </location>
    <ligand>
        <name>1-deoxy-D-xylulose 5-phosphate</name>
        <dbReference type="ChEBI" id="CHEBI:57792"/>
    </ligand>
</feature>
<feature type="binding site" evidence="1">
    <location>
        <position position="209"/>
    </location>
    <ligand>
        <name>1-deoxy-D-xylulose 5-phosphate</name>
        <dbReference type="ChEBI" id="CHEBI:57792"/>
    </ligand>
</feature>
<feature type="binding site" evidence="1">
    <location>
        <position position="215"/>
    </location>
    <ligand>
        <name>NADPH</name>
        <dbReference type="ChEBI" id="CHEBI:57783"/>
    </ligand>
</feature>
<feature type="binding site" evidence="1">
    <location>
        <position position="222"/>
    </location>
    <ligand>
        <name>1-deoxy-D-xylulose 5-phosphate</name>
        <dbReference type="ChEBI" id="CHEBI:57792"/>
    </ligand>
</feature>
<feature type="binding site" evidence="1">
    <location>
        <position position="227"/>
    </location>
    <ligand>
        <name>1-deoxy-D-xylulose 5-phosphate</name>
        <dbReference type="ChEBI" id="CHEBI:57792"/>
    </ligand>
</feature>
<feature type="binding site" evidence="1">
    <location>
        <position position="228"/>
    </location>
    <ligand>
        <name>1-deoxy-D-xylulose 5-phosphate</name>
        <dbReference type="ChEBI" id="CHEBI:57792"/>
    </ligand>
</feature>
<feature type="binding site" evidence="1">
    <location>
        <position position="231"/>
    </location>
    <ligand>
        <name>1-deoxy-D-xylulose 5-phosphate</name>
        <dbReference type="ChEBI" id="CHEBI:57792"/>
    </ligand>
</feature>
<feature type="binding site" evidence="1">
    <location>
        <position position="231"/>
    </location>
    <ligand>
        <name>Mn(2+)</name>
        <dbReference type="ChEBI" id="CHEBI:29035"/>
    </ligand>
</feature>
<name>DXR_VIBC3</name>
<reference key="1">
    <citation type="submission" date="2007-03" db="EMBL/GenBank/DDBJ databases">
        <authorList>
            <person name="Heidelberg J."/>
        </authorList>
    </citation>
    <scope>NUCLEOTIDE SEQUENCE [LARGE SCALE GENOMIC DNA]</scope>
    <source>
        <strain>ATCC 39541 / Classical Ogawa 395 / O395</strain>
    </source>
</reference>
<reference key="2">
    <citation type="journal article" date="2008" name="PLoS ONE">
        <title>A recalibrated molecular clock and independent origins for the cholera pandemic clones.</title>
        <authorList>
            <person name="Feng L."/>
            <person name="Reeves P.R."/>
            <person name="Lan R."/>
            <person name="Ren Y."/>
            <person name="Gao C."/>
            <person name="Zhou Z."/>
            <person name="Ren Y."/>
            <person name="Cheng J."/>
            <person name="Wang W."/>
            <person name="Wang J."/>
            <person name="Qian W."/>
            <person name="Li D."/>
            <person name="Wang L."/>
        </authorList>
    </citation>
    <scope>NUCLEOTIDE SEQUENCE [LARGE SCALE GENOMIC DNA]</scope>
    <source>
        <strain>ATCC 39541 / Classical Ogawa 395 / O395</strain>
    </source>
</reference>
<dbReference type="EC" id="1.1.1.267" evidence="1"/>
<dbReference type="EMBL" id="CP000627">
    <property type="protein sequence ID" value="ABQ20666.1"/>
    <property type="molecule type" value="Genomic_DNA"/>
</dbReference>
<dbReference type="EMBL" id="CP001235">
    <property type="protein sequence ID" value="ACP10360.1"/>
    <property type="molecule type" value="Genomic_DNA"/>
</dbReference>
<dbReference type="SMR" id="A5F615"/>
<dbReference type="KEGG" id="vco:VC0395_A1845"/>
<dbReference type="KEGG" id="vcr:VC395_2370"/>
<dbReference type="PATRIC" id="fig|345073.21.peg.2285"/>
<dbReference type="eggNOG" id="COG0743">
    <property type="taxonomic scope" value="Bacteria"/>
</dbReference>
<dbReference type="HOGENOM" id="CLU_035714_4_0_6"/>
<dbReference type="OrthoDB" id="9806546at2"/>
<dbReference type="UniPathway" id="UPA00056">
    <property type="reaction ID" value="UER00092"/>
</dbReference>
<dbReference type="Proteomes" id="UP000000249">
    <property type="component" value="Chromosome 2"/>
</dbReference>
<dbReference type="GO" id="GO:0030604">
    <property type="term" value="F:1-deoxy-D-xylulose-5-phosphate reductoisomerase activity"/>
    <property type="evidence" value="ECO:0007669"/>
    <property type="project" value="UniProtKB-UniRule"/>
</dbReference>
<dbReference type="GO" id="GO:0030145">
    <property type="term" value="F:manganese ion binding"/>
    <property type="evidence" value="ECO:0007669"/>
    <property type="project" value="TreeGrafter"/>
</dbReference>
<dbReference type="GO" id="GO:0070402">
    <property type="term" value="F:NADPH binding"/>
    <property type="evidence" value="ECO:0007669"/>
    <property type="project" value="InterPro"/>
</dbReference>
<dbReference type="GO" id="GO:0051484">
    <property type="term" value="P:isopentenyl diphosphate biosynthetic process, methylerythritol 4-phosphate pathway involved in terpenoid biosynthetic process"/>
    <property type="evidence" value="ECO:0007669"/>
    <property type="project" value="TreeGrafter"/>
</dbReference>
<dbReference type="FunFam" id="1.10.1740.10:FF:000004">
    <property type="entry name" value="1-deoxy-D-xylulose 5-phosphate reductoisomerase"/>
    <property type="match status" value="1"/>
</dbReference>
<dbReference type="FunFam" id="3.40.50.720:FF:000045">
    <property type="entry name" value="1-deoxy-D-xylulose 5-phosphate reductoisomerase"/>
    <property type="match status" value="1"/>
</dbReference>
<dbReference type="Gene3D" id="1.10.1740.10">
    <property type="match status" value="1"/>
</dbReference>
<dbReference type="Gene3D" id="3.40.50.720">
    <property type="entry name" value="NAD(P)-binding Rossmann-like Domain"/>
    <property type="match status" value="1"/>
</dbReference>
<dbReference type="HAMAP" id="MF_00183">
    <property type="entry name" value="DXP_reductoisom"/>
    <property type="match status" value="1"/>
</dbReference>
<dbReference type="InterPro" id="IPR003821">
    <property type="entry name" value="DXP_reductoisomerase"/>
</dbReference>
<dbReference type="InterPro" id="IPR013644">
    <property type="entry name" value="DXP_reductoisomerase_C"/>
</dbReference>
<dbReference type="InterPro" id="IPR013512">
    <property type="entry name" value="DXP_reductoisomerase_N"/>
</dbReference>
<dbReference type="InterPro" id="IPR026877">
    <property type="entry name" value="DXPR_C"/>
</dbReference>
<dbReference type="InterPro" id="IPR036169">
    <property type="entry name" value="DXPR_C_sf"/>
</dbReference>
<dbReference type="InterPro" id="IPR036291">
    <property type="entry name" value="NAD(P)-bd_dom_sf"/>
</dbReference>
<dbReference type="NCBIfam" id="TIGR00243">
    <property type="entry name" value="Dxr"/>
    <property type="match status" value="1"/>
</dbReference>
<dbReference type="NCBIfam" id="NF003938">
    <property type="entry name" value="PRK05447.1-1"/>
    <property type="match status" value="1"/>
</dbReference>
<dbReference type="NCBIfam" id="NF009114">
    <property type="entry name" value="PRK12464.1"/>
    <property type="match status" value="1"/>
</dbReference>
<dbReference type="PANTHER" id="PTHR30525">
    <property type="entry name" value="1-DEOXY-D-XYLULOSE 5-PHOSPHATE REDUCTOISOMERASE"/>
    <property type="match status" value="1"/>
</dbReference>
<dbReference type="PANTHER" id="PTHR30525:SF0">
    <property type="entry name" value="1-DEOXY-D-XYLULOSE 5-PHOSPHATE REDUCTOISOMERASE, CHLOROPLASTIC"/>
    <property type="match status" value="1"/>
</dbReference>
<dbReference type="Pfam" id="PF08436">
    <property type="entry name" value="DXP_redisom_C"/>
    <property type="match status" value="1"/>
</dbReference>
<dbReference type="Pfam" id="PF02670">
    <property type="entry name" value="DXP_reductoisom"/>
    <property type="match status" value="1"/>
</dbReference>
<dbReference type="Pfam" id="PF13288">
    <property type="entry name" value="DXPR_C"/>
    <property type="match status" value="1"/>
</dbReference>
<dbReference type="PIRSF" id="PIRSF006205">
    <property type="entry name" value="Dxp_reductismrs"/>
    <property type="match status" value="1"/>
</dbReference>
<dbReference type="SUPFAM" id="SSF69055">
    <property type="entry name" value="1-deoxy-D-xylulose-5-phosphate reductoisomerase, C-terminal domain"/>
    <property type="match status" value="1"/>
</dbReference>
<dbReference type="SUPFAM" id="SSF55347">
    <property type="entry name" value="Glyceraldehyde-3-phosphate dehydrogenase-like, C-terminal domain"/>
    <property type="match status" value="1"/>
</dbReference>
<dbReference type="SUPFAM" id="SSF51735">
    <property type="entry name" value="NAD(P)-binding Rossmann-fold domains"/>
    <property type="match status" value="1"/>
</dbReference>
<keyword id="KW-0414">Isoprene biosynthesis</keyword>
<keyword id="KW-0464">Manganese</keyword>
<keyword id="KW-0479">Metal-binding</keyword>
<keyword id="KW-0521">NADP</keyword>
<keyword id="KW-0560">Oxidoreductase</keyword>
<accession>A5F615</accession>
<accession>C3M3L1</accession>
<organism>
    <name type="scientific">Vibrio cholerae serotype O1 (strain ATCC 39541 / Classical Ogawa 395 / O395)</name>
    <dbReference type="NCBI Taxonomy" id="345073"/>
    <lineage>
        <taxon>Bacteria</taxon>
        <taxon>Pseudomonadati</taxon>
        <taxon>Pseudomonadota</taxon>
        <taxon>Gammaproteobacteria</taxon>
        <taxon>Vibrionales</taxon>
        <taxon>Vibrionaceae</taxon>
        <taxon>Vibrio</taxon>
    </lineage>
</organism>
<protein>
    <recommendedName>
        <fullName evidence="1">1-deoxy-D-xylulose 5-phosphate reductoisomerase</fullName>
        <shortName evidence="1">DXP reductoisomerase</shortName>
        <ecNumber evidence="1">1.1.1.267</ecNumber>
    </recommendedName>
    <alternativeName>
        <fullName evidence="1">1-deoxyxylulose-5-phosphate reductoisomerase</fullName>
    </alternativeName>
    <alternativeName>
        <fullName evidence="1">2-C-methyl-D-erythritol 4-phosphate synthase</fullName>
    </alternativeName>
</protein>